<proteinExistence type="evidence at protein level"/>
<accession>Q43846</accession>
<accession>O04842</accession>
<sequence>MDVPFPLHRSLSCTSVSNAITHLKIKPILGFVSHGTTSLSVQSSSWRKDGMVTGVSFSICANFSGRRRRKVSTPRSQGSSPKGFVPRKPSGMSTQRKVQKSNGDKESKSTSTSKESEISNQKTVEARVETSDDDTKGVVRDHKFLEDEDEINGSTKSISMSPVRVSSQFVESEETGGDDKDAVKLNKSKRSEESGFIIDSVIREQSGSQGETNASSKGSHAVGTKLYEILQVDVEPQQLKENNAGNVEYKGPVASKLLEITKASDVEHTESNEIDDLDTNSFFKSDLIEEDEPLAAGTVETGDSSLNLRLEMEANLRRQAIERLAEENLLQGIRLFCFPEVVKPDEDVEIFLNRGLSTLKNESDVLIMGAFNEWRYRSFTTRLTETHLNGDWWSCKIHVPKEAYRADFVFFNGQDVYDNNDGNDFSITVKGGMQIIDFENFLLEEKWREQEKLAKEQAERERLAEEQRRIEAEKAEIEADRAQAKEEAAKKKKVLRELMVKATKTRDITWYIEPSEFKCEDKVRLYYNKSSGPLSHAKDLWIHGGYNNWKDGLSIVKKLVKSERIDGDWWYTEVVIPDQALFLDWVFADGPPKHAIAYDNNHRQDFHAIVPNHIPEELYWVEEEHQIFKTLQEERRLREAAMRAKVEKTALLKTETKERTMKSFLLSQKHVVYTEPLDIQAGSSVTVYYNPANTVLNGKPEIWFRCSFNRWTHRLGPLPPQKMSPAENGTHVRATVKVPLDAYMMDFVFSEREDGGIFDNKSGMDYHIPVFGGVAKEPPMHIVHIAVEMAPIAKVGGLGDVVTSLSRAVQDLNHNVDIILPKYDCLKMNNVKDFRFHKNYFWGGTEIKVWFGKVEGLSVYFLEPQNGLFSKGCVYGCSNDGERFGFFCHAALEFLLQGGFSPDIIHCHDWSSAPVAWLFKEQYTHYGLSKSRIVFTIHNLEFGADLIGRAMTNADKATTVSPTYSQEVSGNPVIAPHLHKFHGIVNGIDPDIWDPLNDKFIPIPYTSENVVEGKTAAKEALQRKLGLKQADLPLVGIITRLTHQKGIHLIKHAIWRTLERNGQVVLLGSAPDPRVQNNFVNLANQLHSKYNDRARLCLTYDEPLSHLIYAGADFILVPSIFEPCGLTQLTAMRYGSIPVVRKTGGLYDTVFDVDHDKERAQQCGLEPNGFSFDGADAGGVDYALNRALSAWYDGRDWFNSLCKQVMEQDWSWNRPALDYLELYHAARKLE</sequence>
<organism>
    <name type="scientific">Solanum tuberosum</name>
    <name type="common">Potato</name>
    <dbReference type="NCBI Taxonomy" id="4113"/>
    <lineage>
        <taxon>Eukaryota</taxon>
        <taxon>Viridiplantae</taxon>
        <taxon>Streptophyta</taxon>
        <taxon>Embryophyta</taxon>
        <taxon>Tracheophyta</taxon>
        <taxon>Spermatophyta</taxon>
        <taxon>Magnoliopsida</taxon>
        <taxon>eudicotyledons</taxon>
        <taxon>Gunneridae</taxon>
        <taxon>Pentapetalae</taxon>
        <taxon>asterids</taxon>
        <taxon>lamiids</taxon>
        <taxon>Solanales</taxon>
        <taxon>Solanaceae</taxon>
        <taxon>Solanoideae</taxon>
        <taxon>Solaneae</taxon>
        <taxon>Solanum</taxon>
    </lineage>
</organism>
<evidence type="ECO:0000250" key="1"/>
<evidence type="ECO:0000255" key="2"/>
<evidence type="ECO:0000256" key="3">
    <source>
        <dbReference type="SAM" id="MobiDB-lite"/>
    </source>
</evidence>
<evidence type="ECO:0000305" key="4"/>
<gene>
    <name type="primary">SS3</name>
    <name type="synonym">SSIII</name>
</gene>
<protein>
    <recommendedName>
        <fullName>Soluble starch synthase 3, chloroplastic/amyloplastic</fullName>
        <ecNumber>2.4.1.21</ecNumber>
    </recommendedName>
    <alternativeName>
        <fullName>Soluble starch synthase III</fullName>
        <shortName>SS III</shortName>
    </alternativeName>
</protein>
<comment type="function">
    <text>May account for most of the soluble starch synthase activity in the tubers. Contributes only a tiny percentage of the granule-bound activity, but may also contribute to the deposition of transient starch in chloroplasts of leaves.</text>
</comment>
<comment type="catalytic activity">
    <reaction>
        <text>[(1-&gt;4)-alpha-D-glucosyl](n) + ADP-alpha-D-glucose = [(1-&gt;4)-alpha-D-glucosyl](n+1) + ADP + H(+)</text>
        <dbReference type="Rhea" id="RHEA:18189"/>
        <dbReference type="Rhea" id="RHEA-COMP:9584"/>
        <dbReference type="Rhea" id="RHEA-COMP:9587"/>
        <dbReference type="ChEBI" id="CHEBI:15378"/>
        <dbReference type="ChEBI" id="CHEBI:15444"/>
        <dbReference type="ChEBI" id="CHEBI:57498"/>
        <dbReference type="ChEBI" id="CHEBI:456216"/>
        <dbReference type="EC" id="2.4.1.21"/>
    </reaction>
</comment>
<comment type="pathway">
    <text>Glycan biosynthesis; starch biosynthesis.</text>
</comment>
<comment type="subcellular location">
    <subcellularLocation>
        <location evidence="1">Plastid</location>
        <location evidence="1">Chloroplast</location>
    </subcellularLocation>
    <subcellularLocation>
        <location evidence="1">Plastid</location>
        <location evidence="1">Amyloplast</location>
    </subcellularLocation>
    <text evidence="1">Amyloplast or chloroplast, granule-bound and soluble.</text>
</comment>
<comment type="tissue specificity">
    <text>Tuber, sink and source leaves.</text>
</comment>
<comment type="induction">
    <text>By sucrose under illumination.</text>
</comment>
<comment type="similarity">
    <text evidence="4">Belongs to the glycosyltransferase 1 family. Bacterial/plant glycogen synthase subfamily.</text>
</comment>
<dbReference type="EC" id="2.4.1.21"/>
<dbReference type="EMBL" id="X95759">
    <property type="protein sequence ID" value="CAA65065.1"/>
    <property type="molecule type" value="mRNA"/>
</dbReference>
<dbReference type="EMBL" id="X94400">
    <property type="protein sequence ID" value="CAA64173.1"/>
    <property type="molecule type" value="mRNA"/>
</dbReference>
<dbReference type="PIR" id="T07663">
    <property type="entry name" value="T07663"/>
</dbReference>
<dbReference type="SMR" id="Q43846"/>
<dbReference type="FunCoup" id="Q43846">
    <property type="interactions" value="929"/>
</dbReference>
<dbReference type="STRING" id="4113.Q43846"/>
<dbReference type="CAZy" id="CBM53">
    <property type="family name" value="Carbohydrate-Binding Module Family 53"/>
</dbReference>
<dbReference type="CAZy" id="GT5">
    <property type="family name" value="Glycosyltransferase Family 5"/>
</dbReference>
<dbReference type="PaxDb" id="4113-PGSC0003DMT400042496"/>
<dbReference type="InParanoid" id="Q43846"/>
<dbReference type="BioCyc" id="MetaCyc:MONOMER-1884"/>
<dbReference type="UniPathway" id="UPA00152"/>
<dbReference type="Proteomes" id="UP000011115">
    <property type="component" value="Unassembled WGS sequence"/>
</dbReference>
<dbReference type="ExpressionAtlas" id="Q43846">
    <property type="expression patterns" value="baseline and differential"/>
</dbReference>
<dbReference type="GO" id="GO:0009501">
    <property type="term" value="C:amyloplast"/>
    <property type="evidence" value="ECO:0007669"/>
    <property type="project" value="UniProtKB-SubCell"/>
</dbReference>
<dbReference type="GO" id="GO:0009507">
    <property type="term" value="C:chloroplast"/>
    <property type="evidence" value="ECO:0007669"/>
    <property type="project" value="UniProtKB-SubCell"/>
</dbReference>
<dbReference type="GO" id="GO:0009011">
    <property type="term" value="F:alpha-1,4-glucan glucosyltransferase (ADP-glucose donor) activity"/>
    <property type="evidence" value="ECO:0007669"/>
    <property type="project" value="UniProtKB-EC"/>
</dbReference>
<dbReference type="GO" id="GO:0004373">
    <property type="term" value="F:alpha-1,4-glucan glucosyltransferase (UDP-glucose donor) activity"/>
    <property type="evidence" value="ECO:0007669"/>
    <property type="project" value="InterPro"/>
</dbReference>
<dbReference type="GO" id="GO:2001070">
    <property type="term" value="F:starch binding"/>
    <property type="evidence" value="ECO:0007669"/>
    <property type="project" value="InterPro"/>
</dbReference>
<dbReference type="GO" id="GO:0019252">
    <property type="term" value="P:starch biosynthetic process"/>
    <property type="evidence" value="ECO:0007669"/>
    <property type="project" value="UniProtKB-UniPathway"/>
</dbReference>
<dbReference type="CDD" id="cd03791">
    <property type="entry name" value="GT5_Glycogen_synthase_DULL1-like"/>
    <property type="match status" value="1"/>
</dbReference>
<dbReference type="FunFam" id="3.40.50.2000:FF:000165">
    <property type="entry name" value="Starch synthase, chloroplastic/amyloplastic"/>
    <property type="match status" value="1"/>
</dbReference>
<dbReference type="Gene3D" id="3.40.50.2000">
    <property type="entry name" value="Glycogen Phosphorylase B"/>
    <property type="match status" value="3"/>
</dbReference>
<dbReference type="Gene3D" id="2.60.40.10">
    <property type="entry name" value="Immunoglobulins"/>
    <property type="match status" value="2"/>
</dbReference>
<dbReference type="HAMAP" id="MF_00484">
    <property type="entry name" value="Glycogen_synth"/>
    <property type="match status" value="1"/>
</dbReference>
<dbReference type="InterPro" id="IPR005085">
    <property type="entry name" value="CBM25"/>
</dbReference>
<dbReference type="InterPro" id="IPR001296">
    <property type="entry name" value="Glyco_trans_1"/>
</dbReference>
<dbReference type="InterPro" id="IPR011835">
    <property type="entry name" value="GS/SS"/>
</dbReference>
<dbReference type="InterPro" id="IPR013783">
    <property type="entry name" value="Ig-like_fold"/>
</dbReference>
<dbReference type="InterPro" id="IPR013534">
    <property type="entry name" value="Starch_synth_cat_dom"/>
</dbReference>
<dbReference type="PANTHER" id="PTHR46083">
    <property type="match status" value="1"/>
</dbReference>
<dbReference type="PANTHER" id="PTHR46083:SF5">
    <property type="entry name" value="STARCH SYNTHASE 3, CHLOROPLASTIC_AMYLOPLASTIC"/>
    <property type="match status" value="1"/>
</dbReference>
<dbReference type="Pfam" id="PF16760">
    <property type="entry name" value="CBM53"/>
    <property type="match status" value="3"/>
</dbReference>
<dbReference type="Pfam" id="PF08323">
    <property type="entry name" value="Glyco_transf_5"/>
    <property type="match status" value="1"/>
</dbReference>
<dbReference type="Pfam" id="PF00534">
    <property type="entry name" value="Glycos_transf_1"/>
    <property type="match status" value="1"/>
</dbReference>
<dbReference type="SMART" id="SM01066">
    <property type="entry name" value="CBM_25"/>
    <property type="match status" value="3"/>
</dbReference>
<dbReference type="SUPFAM" id="SSF53756">
    <property type="entry name" value="UDP-Glycosyltransferase/glycogen phosphorylase"/>
    <property type="match status" value="1"/>
</dbReference>
<feature type="transit peptide" description="Chloroplast" evidence="2">
    <location>
        <begin position="1"/>
        <end position="60"/>
    </location>
</feature>
<feature type="chain" id="PRO_0000011146" description="Soluble starch synthase 3, chloroplastic/amyloplastic">
    <location>
        <begin position="61"/>
        <end position="1230"/>
    </location>
</feature>
<feature type="region of interest" description="Disordered" evidence="3">
    <location>
        <begin position="66"/>
        <end position="189"/>
    </location>
</feature>
<feature type="compositionally biased region" description="Basic and acidic residues" evidence="3">
    <location>
        <begin position="124"/>
        <end position="145"/>
    </location>
</feature>
<feature type="compositionally biased region" description="Polar residues" evidence="3">
    <location>
        <begin position="152"/>
        <end position="170"/>
    </location>
</feature>
<feature type="compositionally biased region" description="Basic and acidic residues" evidence="3">
    <location>
        <begin position="177"/>
        <end position="189"/>
    </location>
</feature>
<feature type="binding site" evidence="1">
    <location>
        <position position="794"/>
    </location>
    <ligand>
        <name>ADP-alpha-D-glucose</name>
        <dbReference type="ChEBI" id="CHEBI:57498"/>
    </ligand>
</feature>
<feature type="sequence conflict" description="In Ref. 2; CAA64173." evidence="4" ref="2">
    <original>S</original>
    <variation>P</variation>
    <location>
        <position position="10"/>
    </location>
</feature>
<feature type="sequence conflict" description="In Ref. 2; CAA64173." evidence="4" ref="2">
    <original>I</original>
    <variation>F</variation>
    <location>
        <position position="28"/>
    </location>
</feature>
<feature type="sequence conflict" description="In Ref. 2; CAA64173." evidence="4" ref="2">
    <original>SI</original>
    <variation>PF</variation>
    <location>
        <begin position="58"/>
        <end position="59"/>
    </location>
</feature>
<feature type="sequence conflict" description="In Ref. 2; CAA64173." evidence="4" ref="2">
    <original>F</original>
    <variation>L</variation>
    <location>
        <position position="63"/>
    </location>
</feature>
<feature type="sequence conflict" description="In Ref. 2; CAA64173." evidence="4" ref="2">
    <original>P</original>
    <variation>T</variation>
    <location>
        <position position="74"/>
    </location>
</feature>
<feature type="sequence conflict" description="In Ref. 2; CAA64173." evidence="4" ref="2">
    <original>K</original>
    <variation>Q</variation>
    <location>
        <position position="108"/>
    </location>
</feature>
<feature type="sequence conflict" description="In Ref. 2; CAA64173." evidence="4" ref="2">
    <original>G</original>
    <variation>V</variation>
    <location>
        <position position="137"/>
    </location>
</feature>
<feature type="sequence conflict" description="In Ref. 2." evidence="4" ref="2">
    <original>G</original>
    <variation>D</variation>
    <location>
        <position position="195"/>
    </location>
</feature>
<feature type="sequence conflict" description="In Ref. 2." evidence="4" ref="2">
    <original>I</original>
    <variation>L</variation>
    <location>
        <position position="197"/>
    </location>
</feature>
<feature type="sequence conflict" description="In Ref. 2; CAA64173." evidence="4" ref="2">
    <original>N</original>
    <variation>D</variation>
    <location>
        <position position="1078"/>
    </location>
</feature>
<name>SSY3_SOLTU</name>
<reference key="1">
    <citation type="journal article" date="1996" name="Plant Cell">
        <title>Identification of the major starch synthase in the soluble fraction of potato tubers.</title>
        <authorList>
            <person name="Marshall J."/>
            <person name="Sidebottom C."/>
            <person name="Debet M."/>
            <person name="Martin C."/>
            <person name="Smith A.M."/>
            <person name="Edwards A."/>
        </authorList>
    </citation>
    <scope>NUCLEOTIDE SEQUENCE [MRNA]</scope>
    <scope>PROTEIN SEQUENCE OF 767-773 AND 1000-1014</scope>
    <source>
        <strain>cv. Desiree</strain>
        <tissue>Tuber</tissue>
    </source>
</reference>
<reference key="2">
    <citation type="journal article" date="1996" name="Plant J.">
        <title>Cloning and functional analysis of a cDNA encoding a novel 139 kDa starch synthase from potato (Solanum tuberosum L.).</title>
        <authorList>
            <person name="Abel G.J.W."/>
            <person name="Springer F."/>
            <person name="Willmitzer L."/>
            <person name="Kossmann J."/>
        </authorList>
    </citation>
    <scope>NUCLEOTIDE SEQUENCE [MRNA]</scope>
    <source>
        <strain>cv. Desiree</strain>
    </source>
</reference>
<keyword id="KW-0035">Amyloplast</keyword>
<keyword id="KW-0150">Chloroplast</keyword>
<keyword id="KW-0903">Direct protein sequencing</keyword>
<keyword id="KW-0328">Glycosyltransferase</keyword>
<keyword id="KW-0934">Plastid</keyword>
<keyword id="KW-1185">Reference proteome</keyword>
<keyword id="KW-0750">Starch biosynthesis</keyword>
<keyword id="KW-0808">Transferase</keyword>
<keyword id="KW-0809">Transit peptide</keyword>